<proteinExistence type="evidence at protein level"/>
<reference key="1">
    <citation type="submission" date="1998-09" db="EMBL/GenBank/DDBJ databases">
        <authorList>
            <person name="Tannoch V.J."/>
            <person name="Cormier-Regard S."/>
            <person name="Claycomb W.C."/>
        </authorList>
    </citation>
    <scope>NUCLEOTIDE SEQUENCE [MRNA]</scope>
    <source>
        <tissue>Heart ventricle</tissue>
    </source>
</reference>
<reference key="2">
    <citation type="journal article" date="2005" name="Science">
        <title>The transcriptional landscape of the mammalian genome.</title>
        <authorList>
            <person name="Carninci P."/>
            <person name="Kasukawa T."/>
            <person name="Katayama S."/>
            <person name="Gough J."/>
            <person name="Frith M.C."/>
            <person name="Maeda N."/>
            <person name="Oyama R."/>
            <person name="Ravasi T."/>
            <person name="Lenhard B."/>
            <person name="Wells C."/>
            <person name="Kodzius R."/>
            <person name="Shimokawa K."/>
            <person name="Bajic V.B."/>
            <person name="Brenner S.E."/>
            <person name="Batalov S."/>
            <person name="Forrest A.R."/>
            <person name="Zavolan M."/>
            <person name="Davis M.J."/>
            <person name="Wilming L.G."/>
            <person name="Aidinis V."/>
            <person name="Allen J.E."/>
            <person name="Ambesi-Impiombato A."/>
            <person name="Apweiler R."/>
            <person name="Aturaliya R.N."/>
            <person name="Bailey T.L."/>
            <person name="Bansal M."/>
            <person name="Baxter L."/>
            <person name="Beisel K.W."/>
            <person name="Bersano T."/>
            <person name="Bono H."/>
            <person name="Chalk A.M."/>
            <person name="Chiu K.P."/>
            <person name="Choudhary V."/>
            <person name="Christoffels A."/>
            <person name="Clutterbuck D.R."/>
            <person name="Crowe M.L."/>
            <person name="Dalla E."/>
            <person name="Dalrymple B.P."/>
            <person name="de Bono B."/>
            <person name="Della Gatta G."/>
            <person name="di Bernardo D."/>
            <person name="Down T."/>
            <person name="Engstrom P."/>
            <person name="Fagiolini M."/>
            <person name="Faulkner G."/>
            <person name="Fletcher C.F."/>
            <person name="Fukushima T."/>
            <person name="Furuno M."/>
            <person name="Futaki S."/>
            <person name="Gariboldi M."/>
            <person name="Georgii-Hemming P."/>
            <person name="Gingeras T.R."/>
            <person name="Gojobori T."/>
            <person name="Green R.E."/>
            <person name="Gustincich S."/>
            <person name="Harbers M."/>
            <person name="Hayashi Y."/>
            <person name="Hensch T.K."/>
            <person name="Hirokawa N."/>
            <person name="Hill D."/>
            <person name="Huminiecki L."/>
            <person name="Iacono M."/>
            <person name="Ikeo K."/>
            <person name="Iwama A."/>
            <person name="Ishikawa T."/>
            <person name="Jakt M."/>
            <person name="Kanapin A."/>
            <person name="Katoh M."/>
            <person name="Kawasawa Y."/>
            <person name="Kelso J."/>
            <person name="Kitamura H."/>
            <person name="Kitano H."/>
            <person name="Kollias G."/>
            <person name="Krishnan S.P."/>
            <person name="Kruger A."/>
            <person name="Kummerfeld S.K."/>
            <person name="Kurochkin I.V."/>
            <person name="Lareau L.F."/>
            <person name="Lazarevic D."/>
            <person name="Lipovich L."/>
            <person name="Liu J."/>
            <person name="Liuni S."/>
            <person name="McWilliam S."/>
            <person name="Madan Babu M."/>
            <person name="Madera M."/>
            <person name="Marchionni L."/>
            <person name="Matsuda H."/>
            <person name="Matsuzawa S."/>
            <person name="Miki H."/>
            <person name="Mignone F."/>
            <person name="Miyake S."/>
            <person name="Morris K."/>
            <person name="Mottagui-Tabar S."/>
            <person name="Mulder N."/>
            <person name="Nakano N."/>
            <person name="Nakauchi H."/>
            <person name="Ng P."/>
            <person name="Nilsson R."/>
            <person name="Nishiguchi S."/>
            <person name="Nishikawa S."/>
            <person name="Nori F."/>
            <person name="Ohara O."/>
            <person name="Okazaki Y."/>
            <person name="Orlando V."/>
            <person name="Pang K.C."/>
            <person name="Pavan W.J."/>
            <person name="Pavesi G."/>
            <person name="Pesole G."/>
            <person name="Petrovsky N."/>
            <person name="Piazza S."/>
            <person name="Reed J."/>
            <person name="Reid J.F."/>
            <person name="Ring B.Z."/>
            <person name="Ringwald M."/>
            <person name="Rost B."/>
            <person name="Ruan Y."/>
            <person name="Salzberg S.L."/>
            <person name="Sandelin A."/>
            <person name="Schneider C."/>
            <person name="Schoenbach C."/>
            <person name="Sekiguchi K."/>
            <person name="Semple C.A."/>
            <person name="Seno S."/>
            <person name="Sessa L."/>
            <person name="Sheng Y."/>
            <person name="Shibata Y."/>
            <person name="Shimada H."/>
            <person name="Shimada K."/>
            <person name="Silva D."/>
            <person name="Sinclair B."/>
            <person name="Sperling S."/>
            <person name="Stupka E."/>
            <person name="Sugiura K."/>
            <person name="Sultana R."/>
            <person name="Takenaka Y."/>
            <person name="Taki K."/>
            <person name="Tammoja K."/>
            <person name="Tan S.L."/>
            <person name="Tang S."/>
            <person name="Taylor M.S."/>
            <person name="Tegner J."/>
            <person name="Teichmann S.A."/>
            <person name="Ueda H.R."/>
            <person name="van Nimwegen E."/>
            <person name="Verardo R."/>
            <person name="Wei C.L."/>
            <person name="Yagi K."/>
            <person name="Yamanishi H."/>
            <person name="Zabarovsky E."/>
            <person name="Zhu S."/>
            <person name="Zimmer A."/>
            <person name="Hide W."/>
            <person name="Bult C."/>
            <person name="Grimmond S.M."/>
            <person name="Teasdale R.D."/>
            <person name="Liu E.T."/>
            <person name="Brusic V."/>
            <person name="Quackenbush J."/>
            <person name="Wahlestedt C."/>
            <person name="Mattick J.S."/>
            <person name="Hume D.A."/>
            <person name="Kai C."/>
            <person name="Sasaki D."/>
            <person name="Tomaru Y."/>
            <person name="Fukuda S."/>
            <person name="Kanamori-Katayama M."/>
            <person name="Suzuki M."/>
            <person name="Aoki J."/>
            <person name="Arakawa T."/>
            <person name="Iida J."/>
            <person name="Imamura K."/>
            <person name="Itoh M."/>
            <person name="Kato T."/>
            <person name="Kawaji H."/>
            <person name="Kawagashira N."/>
            <person name="Kawashima T."/>
            <person name="Kojima M."/>
            <person name="Kondo S."/>
            <person name="Konno H."/>
            <person name="Nakano K."/>
            <person name="Ninomiya N."/>
            <person name="Nishio T."/>
            <person name="Okada M."/>
            <person name="Plessy C."/>
            <person name="Shibata K."/>
            <person name="Shiraki T."/>
            <person name="Suzuki S."/>
            <person name="Tagami M."/>
            <person name="Waki K."/>
            <person name="Watahiki A."/>
            <person name="Okamura-Oho Y."/>
            <person name="Suzuki H."/>
            <person name="Kawai J."/>
            <person name="Hayashizaki Y."/>
        </authorList>
    </citation>
    <scope>NUCLEOTIDE SEQUENCE [LARGE SCALE MRNA]</scope>
    <source>
        <strain>C57BL/6J</strain>
        <tissue>Liver</tissue>
    </source>
</reference>
<reference key="3">
    <citation type="submission" date="2005-07" db="EMBL/GenBank/DDBJ databases">
        <authorList>
            <person name="Mural R.J."/>
            <person name="Adams M.D."/>
            <person name="Myers E.W."/>
            <person name="Smith H.O."/>
            <person name="Venter J.C."/>
        </authorList>
    </citation>
    <scope>NUCLEOTIDE SEQUENCE [LARGE SCALE GENOMIC DNA]</scope>
</reference>
<reference key="4">
    <citation type="journal article" date="2004" name="Genome Res.">
        <title>The status, quality, and expansion of the NIH full-length cDNA project: the Mammalian Gene Collection (MGC).</title>
        <authorList>
            <consortium name="The MGC Project Team"/>
        </authorList>
    </citation>
    <scope>NUCLEOTIDE SEQUENCE [LARGE SCALE MRNA]</scope>
</reference>
<reference key="5">
    <citation type="journal article" date="2000" name="RNA">
        <title>REF, an evolutionarily conserved family of hnRNP-like proteins, interacts with TAP/Mex67p and participates in mRNA nuclear export.</title>
        <authorList>
            <person name="Stutz F."/>
            <person name="Bachi A."/>
            <person name="Doerks T."/>
            <person name="Braun I.C."/>
            <person name="Seraphin B."/>
            <person name="Wilm M."/>
            <person name="Bork P."/>
            <person name="Izaurralde E."/>
        </authorList>
    </citation>
    <scope>INTERACTION WITH ALYREF/THOC4</scope>
</reference>
<reference key="6">
    <citation type="journal article" date="2002" name="EMBO J.">
        <title>The exon junction complex is detected on CBP80-bound but not eIF4E-bound mRNA in mammalian cells: dynamics of mRNP remodeling.</title>
        <authorList>
            <person name="Lejeune F."/>
            <person name="Ishigaki Y."/>
            <person name="Li X."/>
            <person name="Maquat L.E."/>
        </authorList>
    </citation>
    <scope>INTERACTION WITH THE EXON JUNCTION COMPLEX</scope>
</reference>
<reference key="7">
    <citation type="journal article" date="2006" name="Biochemistry">
        <title>Endogenously nitrated proteins in mouse brain: links to neurodegenerative disease.</title>
        <authorList>
            <person name="Sacksteder C.A."/>
            <person name="Qian W.-J."/>
            <person name="Knyushko T.V."/>
            <person name="Wang H."/>
            <person name="Chin M.H."/>
            <person name="Lacan G."/>
            <person name="Melega W.P."/>
            <person name="Camp D.G. II"/>
            <person name="Smith R.D."/>
            <person name="Smith D.J."/>
            <person name="Squier T.C."/>
            <person name="Bigelow D.J."/>
        </authorList>
    </citation>
    <scope>NITRATION [LARGE SCALE ANALYSIS] AT TYR-125</scope>
    <scope>IDENTIFICATION BY MASS SPECTROMETRY [LARGE SCALE ANALYSIS]</scope>
    <source>
        <tissue>Brain</tissue>
    </source>
</reference>
<reference key="8">
    <citation type="journal article" date="2010" name="Cell">
        <title>A tissue-specific atlas of mouse protein phosphorylation and expression.</title>
        <authorList>
            <person name="Huttlin E.L."/>
            <person name="Jedrychowski M.P."/>
            <person name="Elias J.E."/>
            <person name="Goswami T."/>
            <person name="Rad R."/>
            <person name="Beausoleil S.A."/>
            <person name="Villen J."/>
            <person name="Haas W."/>
            <person name="Sowa M.E."/>
            <person name="Gygi S.P."/>
        </authorList>
    </citation>
    <scope>IDENTIFICATION BY MASS SPECTROMETRY [LARGE SCALE ANALYSIS]</scope>
    <source>
        <tissue>Liver</tissue>
        <tissue>Lung</tissue>
        <tissue>Pancreas</tissue>
        <tissue>Spleen</tissue>
        <tissue>Testis</tissue>
    </source>
</reference>
<reference key="9">
    <citation type="journal article" date="2014" name="Mol. Cell. Proteomics">
        <title>Immunoaffinity enrichment and mass spectrometry analysis of protein methylation.</title>
        <authorList>
            <person name="Guo A."/>
            <person name="Gu H."/>
            <person name="Zhou J."/>
            <person name="Mulhern D."/>
            <person name="Wang Y."/>
            <person name="Lee K.A."/>
            <person name="Yang V."/>
            <person name="Aguiar M."/>
            <person name="Kornhauser J."/>
            <person name="Jia X."/>
            <person name="Ren J."/>
            <person name="Beausoleil S.A."/>
            <person name="Silva J.C."/>
            <person name="Vemulapalli V."/>
            <person name="Bedford M.T."/>
            <person name="Comb M.J."/>
        </authorList>
    </citation>
    <scope>METHYLATION [LARGE SCALE ANALYSIS] AT ARG-41</scope>
    <scope>IDENTIFICATION BY MASS SPECTROMETRY [LARGE SCALE ANALYSIS]</scope>
    <source>
        <tissue>Brain</tissue>
        <tissue>Embryo</tissue>
    </source>
</reference>
<name>NXF1_MOUSE</name>
<organism>
    <name type="scientific">Mus musculus</name>
    <name type="common">Mouse</name>
    <dbReference type="NCBI Taxonomy" id="10090"/>
    <lineage>
        <taxon>Eukaryota</taxon>
        <taxon>Metazoa</taxon>
        <taxon>Chordata</taxon>
        <taxon>Craniata</taxon>
        <taxon>Vertebrata</taxon>
        <taxon>Euteleostomi</taxon>
        <taxon>Mammalia</taxon>
        <taxon>Eutheria</taxon>
        <taxon>Euarchontoglires</taxon>
        <taxon>Glires</taxon>
        <taxon>Rodentia</taxon>
        <taxon>Myomorpha</taxon>
        <taxon>Muroidea</taxon>
        <taxon>Muridae</taxon>
        <taxon>Murinae</taxon>
        <taxon>Mus</taxon>
        <taxon>Mus</taxon>
    </lineage>
</organism>
<protein>
    <recommendedName>
        <fullName>Nuclear RNA export factor 1</fullName>
    </recommendedName>
    <alternativeName>
        <fullName>Tip-associated protein</fullName>
    </alternativeName>
    <alternativeName>
        <fullName>Tip-associating protein</fullName>
    </alternativeName>
    <alternativeName>
        <fullName>mRNA export factor TAP</fullName>
    </alternativeName>
</protein>
<dbReference type="EMBL" id="AF093140">
    <property type="protein sequence ID" value="AAC63368.1"/>
    <property type="molecule type" value="mRNA"/>
</dbReference>
<dbReference type="EMBL" id="AK133883">
    <property type="protein sequence ID" value="BAE21911.1"/>
    <property type="molecule type" value="mRNA"/>
</dbReference>
<dbReference type="EMBL" id="AK167518">
    <property type="protein sequence ID" value="BAE39590.1"/>
    <property type="molecule type" value="mRNA"/>
</dbReference>
<dbReference type="EMBL" id="CH466612">
    <property type="protein sequence ID" value="EDL33363.1"/>
    <property type="molecule type" value="Genomic_DNA"/>
</dbReference>
<dbReference type="EMBL" id="BC005594">
    <property type="protein sequence ID" value="AAH05594.1"/>
    <property type="molecule type" value="mRNA"/>
</dbReference>
<dbReference type="CCDS" id="CCDS29543.1"/>
<dbReference type="RefSeq" id="NP_058093.2">
    <property type="nucleotide sequence ID" value="NM_016813.2"/>
</dbReference>
<dbReference type="BMRB" id="Q99JX7"/>
<dbReference type="SMR" id="Q99JX7"/>
<dbReference type="BioGRID" id="207282">
    <property type="interactions" value="21"/>
</dbReference>
<dbReference type="FunCoup" id="Q99JX7">
    <property type="interactions" value="3909"/>
</dbReference>
<dbReference type="STRING" id="10090.ENSMUSP00000010241"/>
<dbReference type="GlyGen" id="Q99JX7">
    <property type="glycosylation" value="3 sites, 1 N-linked glycan (1 site), 1 O-linked glycan (1 site)"/>
</dbReference>
<dbReference type="iPTMnet" id="Q99JX7"/>
<dbReference type="PhosphoSitePlus" id="Q99JX7"/>
<dbReference type="SwissPalm" id="Q99JX7"/>
<dbReference type="jPOST" id="Q99JX7"/>
<dbReference type="PaxDb" id="10090-ENSMUSP00000010241"/>
<dbReference type="PeptideAtlas" id="Q99JX7"/>
<dbReference type="ProteomicsDB" id="291930"/>
<dbReference type="Pumba" id="Q99JX7"/>
<dbReference type="Antibodypedia" id="4277">
    <property type="antibodies" value="302 antibodies from 36 providers"/>
</dbReference>
<dbReference type="DNASU" id="53319"/>
<dbReference type="Ensembl" id="ENSMUST00000010241.14">
    <property type="protein sequence ID" value="ENSMUSP00000010241.7"/>
    <property type="gene ID" value="ENSMUSG00000010097.16"/>
</dbReference>
<dbReference type="GeneID" id="53319"/>
<dbReference type="KEGG" id="mmu:53319"/>
<dbReference type="UCSC" id="uc008gmr.1">
    <property type="organism name" value="mouse"/>
</dbReference>
<dbReference type="AGR" id="MGI:1858330"/>
<dbReference type="CTD" id="10482"/>
<dbReference type="MGI" id="MGI:1858330">
    <property type="gene designation" value="Nxf1"/>
</dbReference>
<dbReference type="VEuPathDB" id="HostDB:ENSMUSG00000010097"/>
<dbReference type="eggNOG" id="KOG3763">
    <property type="taxonomic scope" value="Eukaryota"/>
</dbReference>
<dbReference type="GeneTree" id="ENSGT00390000007539"/>
<dbReference type="HOGENOM" id="CLU_011280_2_0_1"/>
<dbReference type="InParanoid" id="Q99JX7"/>
<dbReference type="OMA" id="YGGHEAW"/>
<dbReference type="OrthoDB" id="25872at2759"/>
<dbReference type="PhylomeDB" id="Q99JX7"/>
<dbReference type="TreeFam" id="TF314566"/>
<dbReference type="Reactome" id="R-MMU-159227">
    <property type="pathway name" value="Transport of the SLBP independent Mature mRNA"/>
</dbReference>
<dbReference type="Reactome" id="R-MMU-159230">
    <property type="pathway name" value="Transport of the SLBP Dependant Mature mRNA"/>
</dbReference>
<dbReference type="Reactome" id="R-MMU-159231">
    <property type="pathway name" value="Transport of Mature mRNA Derived from an Intronless Transcript"/>
</dbReference>
<dbReference type="Reactome" id="R-MMU-159236">
    <property type="pathway name" value="Transport of Mature mRNA derived from an Intron-Containing Transcript"/>
</dbReference>
<dbReference type="BioGRID-ORCS" id="53319">
    <property type="hits" value="29 hits in 78 CRISPR screens"/>
</dbReference>
<dbReference type="ChiTaRS" id="Nxf1">
    <property type="organism name" value="mouse"/>
</dbReference>
<dbReference type="PRO" id="PR:Q99JX7"/>
<dbReference type="Proteomes" id="UP000000589">
    <property type="component" value="Chromosome 19"/>
</dbReference>
<dbReference type="RNAct" id="Q99JX7">
    <property type="molecule type" value="protein"/>
</dbReference>
<dbReference type="Bgee" id="ENSMUSG00000010097">
    <property type="expression patterns" value="Expressed in undifferentiated genital tubercle and 266 other cell types or tissues"/>
</dbReference>
<dbReference type="ExpressionAtlas" id="Q99JX7">
    <property type="expression patterns" value="baseline and differential"/>
</dbReference>
<dbReference type="GO" id="GO:0005737">
    <property type="term" value="C:cytoplasm"/>
    <property type="evidence" value="ECO:0000250"/>
    <property type="project" value="UniProtKB"/>
</dbReference>
<dbReference type="GO" id="GO:0010494">
    <property type="term" value="C:cytoplasmic stress granule"/>
    <property type="evidence" value="ECO:0007669"/>
    <property type="project" value="UniProtKB-SubCell"/>
</dbReference>
<dbReference type="GO" id="GO:0042405">
    <property type="term" value="C:nuclear inclusion body"/>
    <property type="evidence" value="ECO:0000314"/>
    <property type="project" value="MGI"/>
</dbReference>
<dbReference type="GO" id="GO:0005643">
    <property type="term" value="C:nuclear pore"/>
    <property type="evidence" value="ECO:0000314"/>
    <property type="project" value="MGI"/>
</dbReference>
<dbReference type="GO" id="GO:0042272">
    <property type="term" value="C:nuclear RNA export factor complex"/>
    <property type="evidence" value="ECO:0007669"/>
    <property type="project" value="Ensembl"/>
</dbReference>
<dbReference type="GO" id="GO:0016607">
    <property type="term" value="C:nuclear speck"/>
    <property type="evidence" value="ECO:0000250"/>
    <property type="project" value="UniProtKB"/>
</dbReference>
<dbReference type="GO" id="GO:0005634">
    <property type="term" value="C:nucleus"/>
    <property type="evidence" value="ECO:0000314"/>
    <property type="project" value="MGI"/>
</dbReference>
<dbReference type="GO" id="GO:0000346">
    <property type="term" value="C:transcription export complex"/>
    <property type="evidence" value="ECO:0007669"/>
    <property type="project" value="Ensembl"/>
</dbReference>
<dbReference type="GO" id="GO:0003729">
    <property type="term" value="F:mRNA binding"/>
    <property type="evidence" value="ECO:0000314"/>
    <property type="project" value="MGI"/>
</dbReference>
<dbReference type="GO" id="GO:0003723">
    <property type="term" value="F:RNA binding"/>
    <property type="evidence" value="ECO:0000314"/>
    <property type="project" value="MGI"/>
</dbReference>
<dbReference type="GO" id="GO:0016973">
    <property type="term" value="P:poly(A)+ mRNA export from nucleus"/>
    <property type="evidence" value="ECO:0000353"/>
    <property type="project" value="MGI"/>
</dbReference>
<dbReference type="GO" id="GO:0015031">
    <property type="term" value="P:protein transport"/>
    <property type="evidence" value="ECO:0007669"/>
    <property type="project" value="UniProtKB-KW"/>
</dbReference>
<dbReference type="GO" id="GO:0006405">
    <property type="term" value="P:RNA export from nucleus"/>
    <property type="evidence" value="ECO:0000314"/>
    <property type="project" value="MGI"/>
</dbReference>
<dbReference type="CDD" id="cd00780">
    <property type="entry name" value="NTF2"/>
    <property type="match status" value="1"/>
</dbReference>
<dbReference type="CDD" id="cd14342">
    <property type="entry name" value="UBA_TAP-C"/>
    <property type="match status" value="1"/>
</dbReference>
<dbReference type="FunFam" id="1.10.8.10:FF:000018">
    <property type="entry name" value="Nuclear RNA export factor 1"/>
    <property type="match status" value="1"/>
</dbReference>
<dbReference type="FunFam" id="3.10.450.50:FF:000004">
    <property type="entry name" value="Nuclear RNA export factor 1"/>
    <property type="match status" value="1"/>
</dbReference>
<dbReference type="FunFam" id="3.80.10.10:FF:000066">
    <property type="entry name" value="Nuclear RNA export factor 1"/>
    <property type="match status" value="1"/>
</dbReference>
<dbReference type="FunFam" id="3.30.70.330:FF:000165">
    <property type="entry name" value="nuclear RNA export factor 1"/>
    <property type="match status" value="1"/>
</dbReference>
<dbReference type="Gene3D" id="3.10.450.50">
    <property type="match status" value="1"/>
</dbReference>
<dbReference type="Gene3D" id="3.30.70.330">
    <property type="match status" value="1"/>
</dbReference>
<dbReference type="Gene3D" id="1.10.8.10">
    <property type="entry name" value="DNA helicase RuvA subunit, C-terminal domain"/>
    <property type="match status" value="1"/>
</dbReference>
<dbReference type="Gene3D" id="3.80.10.10">
    <property type="entry name" value="Ribonuclease Inhibitor"/>
    <property type="match status" value="1"/>
</dbReference>
<dbReference type="InterPro" id="IPR001611">
    <property type="entry name" value="Leu-rich_rpt"/>
</dbReference>
<dbReference type="InterPro" id="IPR032675">
    <property type="entry name" value="LRR_dom_sf"/>
</dbReference>
<dbReference type="InterPro" id="IPR032710">
    <property type="entry name" value="NTF2-like_dom_sf"/>
</dbReference>
<dbReference type="InterPro" id="IPR002075">
    <property type="entry name" value="NTF2_dom"/>
</dbReference>
<dbReference type="InterPro" id="IPR018222">
    <property type="entry name" value="Nuclear_transport_factor_2_euk"/>
</dbReference>
<dbReference type="InterPro" id="IPR012677">
    <property type="entry name" value="Nucleotide-bd_a/b_plait_sf"/>
</dbReference>
<dbReference type="InterPro" id="IPR030217">
    <property type="entry name" value="NXF_fam"/>
</dbReference>
<dbReference type="InterPro" id="IPR035979">
    <property type="entry name" value="RBD_domain_sf"/>
</dbReference>
<dbReference type="InterPro" id="IPR005637">
    <property type="entry name" value="TAP_C_dom"/>
</dbReference>
<dbReference type="InterPro" id="IPR015245">
    <property type="entry name" value="Tap_RNA-bd"/>
</dbReference>
<dbReference type="InterPro" id="IPR009060">
    <property type="entry name" value="UBA-like_sf"/>
</dbReference>
<dbReference type="PANTHER" id="PTHR10662">
    <property type="entry name" value="NUCLEAR RNA EXPORT FACTOR"/>
    <property type="match status" value="1"/>
</dbReference>
<dbReference type="PANTHER" id="PTHR10662:SF27">
    <property type="entry name" value="NUCLEAR RNA EXPORT FACTOR 1"/>
    <property type="match status" value="1"/>
</dbReference>
<dbReference type="Pfam" id="PF24048">
    <property type="entry name" value="LRR_NXF1-5"/>
    <property type="match status" value="1"/>
</dbReference>
<dbReference type="Pfam" id="PF22602">
    <property type="entry name" value="NXF_NTF2"/>
    <property type="match status" value="1"/>
</dbReference>
<dbReference type="Pfam" id="PF09162">
    <property type="entry name" value="Tap-RNA_bind"/>
    <property type="match status" value="1"/>
</dbReference>
<dbReference type="Pfam" id="PF03943">
    <property type="entry name" value="TAP_C"/>
    <property type="match status" value="1"/>
</dbReference>
<dbReference type="SMART" id="SM00804">
    <property type="entry name" value="TAP_C"/>
    <property type="match status" value="1"/>
</dbReference>
<dbReference type="SUPFAM" id="SSF52058">
    <property type="entry name" value="L domain-like"/>
    <property type="match status" value="1"/>
</dbReference>
<dbReference type="SUPFAM" id="SSF54427">
    <property type="entry name" value="NTF2-like"/>
    <property type="match status" value="1"/>
</dbReference>
<dbReference type="SUPFAM" id="SSF54928">
    <property type="entry name" value="RNA-binding domain, RBD"/>
    <property type="match status" value="1"/>
</dbReference>
<dbReference type="SUPFAM" id="SSF46934">
    <property type="entry name" value="UBA-like"/>
    <property type="match status" value="1"/>
</dbReference>
<dbReference type="PROSITE" id="PS51450">
    <property type="entry name" value="LRR"/>
    <property type="match status" value="3"/>
</dbReference>
<dbReference type="PROSITE" id="PS50177">
    <property type="entry name" value="NTF2_DOMAIN"/>
    <property type="match status" value="1"/>
</dbReference>
<dbReference type="PROSITE" id="PS51281">
    <property type="entry name" value="TAP_C"/>
    <property type="match status" value="1"/>
</dbReference>
<feature type="initiator methionine" description="Removed" evidence="2">
    <location>
        <position position="1"/>
    </location>
</feature>
<feature type="chain" id="PRO_0000220530" description="Nuclear RNA export factor 1">
    <location>
        <begin position="2"/>
        <end position="618"/>
    </location>
</feature>
<feature type="domain" description="RRM">
    <location>
        <begin position="118"/>
        <end position="197"/>
    </location>
</feature>
<feature type="repeat" description="LRR 1">
    <location>
        <begin position="265"/>
        <end position="290"/>
    </location>
</feature>
<feature type="repeat" description="LRR 2">
    <location>
        <begin position="291"/>
        <end position="314"/>
    </location>
</feature>
<feature type="repeat" description="LRR 3">
    <location>
        <begin position="315"/>
        <end position="342"/>
    </location>
</feature>
<feature type="repeat" description="LRR 4">
    <location>
        <begin position="343"/>
        <end position="370"/>
    </location>
</feature>
<feature type="domain" description="NTF2" evidence="3">
    <location>
        <begin position="385"/>
        <end position="535"/>
    </location>
</feature>
<feature type="domain" description="TAP-C" evidence="4">
    <location>
        <begin position="564"/>
        <end position="618"/>
    </location>
</feature>
<feature type="region of interest" description="Disordered" evidence="5">
    <location>
        <begin position="1"/>
        <end position="113"/>
    </location>
</feature>
<feature type="region of interest" description="Interaction with ALYREF/THOC4 and LUZP4" evidence="2">
    <location>
        <begin position="2"/>
        <end position="197"/>
    </location>
</feature>
<feature type="region of interest" description="RNA-binding (RBD)" evidence="1">
    <location>
        <begin position="2"/>
        <end position="117"/>
    </location>
</feature>
<feature type="region of interest" description="Minor non-specific RNA-binding" evidence="1">
    <location>
        <begin position="2"/>
        <end position="59"/>
    </location>
</feature>
<feature type="region of interest" description="Major non-specific RNA-binding" evidence="1">
    <location>
        <begin position="60"/>
        <end position="117"/>
    </location>
</feature>
<feature type="region of interest" description="RNA binding" evidence="1">
    <location>
        <begin position="60"/>
        <end position="117"/>
    </location>
</feature>
<feature type="short sequence motif" description="Nuclear localization signal" evidence="1">
    <location>
        <begin position="66"/>
        <end position="99"/>
    </location>
</feature>
<feature type="short sequence motif" description="Nuclear export signal" evidence="1">
    <location>
        <begin position="82"/>
        <end position="109"/>
    </location>
</feature>
<feature type="compositionally biased region" description="Basic and acidic residues" evidence="5">
    <location>
        <begin position="1"/>
        <end position="15"/>
    </location>
</feature>
<feature type="compositionally biased region" description="Basic residues" evidence="5">
    <location>
        <begin position="19"/>
        <end position="28"/>
    </location>
</feature>
<feature type="compositionally biased region" description="Basic and acidic residues" evidence="5">
    <location>
        <begin position="80"/>
        <end position="102"/>
    </location>
</feature>
<feature type="modified residue" description="N-acetylalanine" evidence="2">
    <location>
        <position position="2"/>
    </location>
</feature>
<feature type="modified residue" description="Asymmetric dimethylarginine; alternate" evidence="10">
    <location>
        <position position="41"/>
    </location>
</feature>
<feature type="modified residue" description="Omega-N-methylarginine; alternate" evidence="10">
    <location>
        <position position="41"/>
    </location>
</feature>
<feature type="modified residue" description="3'-nitrotyrosine" evidence="9">
    <location>
        <position position="125"/>
    </location>
</feature>
<feature type="sequence conflict" description="In Ref. 1; AAC63368." evidence="8" ref="1">
    <original>N</original>
    <variation>D</variation>
    <location>
        <position position="79"/>
    </location>
</feature>
<sequence>MADEGKSYNEHDDRVSFPQRRKKGRGPFRWKCGEGNRRSGRGGSGVQSSRFEEDDGDVAMNDPQDGPRVRYNPYTNRPNRRGDGWHDRDRIHITVRRDRAPAERGGAGTSQDGTTKNWFKITIPYGRKYDKTWLLSMIQSKCSVPFNPIEFHYENTRAHFFVEDATTASALKGVNHKIQDRENRRISIIINASAPPYTVQNELKPEQIEQLKLIMSKRYDGNQQALDLKGLRSDPDLVAQNIDVVLNRRSCMAATLRIIEENIPELLSLNLSSNRLYKLDDMSSIVQKAPNLKTLNLSGNELKTERELDKIKGLKLEELWLDRNPMCDNFGDQSSYISAIRERFPKLLRLDGHELPPPISFDVEAPTMLPPCKGSYFGTENLKSLVLRFLQQYYVIYDSGDRQGLLYAYHDGACCSLSIPYNPQNPVRKNLAEYVKDSRNVKKLKEPTQRFRLLKHTRLNVVAFLNELPKTQHDVNAFVVDISAQTSTLLCFSVNGVFKEVDGKSRDSLRAFTRTFIAVPASNSGLCIVNDELFVRNASPEEIQRAFAMSAPTPSSSPVPTLSPEQQEMLQAFSTQSGMNLEWSQKCLQDNNWDYTRSAQAFTLLKAKGEIPEVAFMK</sequence>
<keyword id="KW-0007">Acetylation</keyword>
<keyword id="KW-0963">Cytoplasm</keyword>
<keyword id="KW-0433">Leucine-rich repeat</keyword>
<keyword id="KW-0488">Methylation</keyword>
<keyword id="KW-0509">mRNA transport</keyword>
<keyword id="KW-0944">Nitration</keyword>
<keyword id="KW-0906">Nuclear pore complex</keyword>
<keyword id="KW-0539">Nucleus</keyword>
<keyword id="KW-0653">Protein transport</keyword>
<keyword id="KW-1185">Reference proteome</keyword>
<keyword id="KW-0677">Repeat</keyword>
<keyword id="KW-0694">RNA-binding</keyword>
<keyword id="KW-0811">Translocation</keyword>
<keyword id="KW-0813">Transport</keyword>
<evidence type="ECO:0000250" key="1"/>
<evidence type="ECO:0000250" key="2">
    <source>
        <dbReference type="UniProtKB" id="Q9UBU9"/>
    </source>
</evidence>
<evidence type="ECO:0000255" key="3">
    <source>
        <dbReference type="PROSITE-ProRule" id="PRU00137"/>
    </source>
</evidence>
<evidence type="ECO:0000255" key="4">
    <source>
        <dbReference type="PROSITE-ProRule" id="PRU00611"/>
    </source>
</evidence>
<evidence type="ECO:0000256" key="5">
    <source>
        <dbReference type="SAM" id="MobiDB-lite"/>
    </source>
</evidence>
<evidence type="ECO:0000269" key="6">
    <source>
    </source>
</evidence>
<evidence type="ECO:0000269" key="7">
    <source>
    </source>
</evidence>
<evidence type="ECO:0000305" key="8"/>
<evidence type="ECO:0007744" key="9">
    <source>
    </source>
</evidence>
<evidence type="ECO:0007744" key="10">
    <source>
    </source>
</evidence>
<accession>Q99JX7</accession>
<accession>O88985</accession>
<accession>Q3TJA5</accession>
<gene>
    <name type="primary">Nxf1</name>
    <name type="synonym">Tap</name>
</gene>
<comment type="function">
    <text evidence="2">Involved in the nuclear export of mRNA species bearing retroviral constitutive transport elements (CTE) and in the export of mRNA from the nucleus to the cytoplasm (TAP/NFX1 pathway). The NXF1-NXT1 heterodimer is involved in the export of HSP70 mRNA in conjunction with ALYREF/THOC4 and THOC5 components of the TREX complex. ALYREF/THOC4-bound mRNA is thought to be transferred to the NXF1-NXT1 heterodimer for export. Also involved in nuclear export of m6A-containing mRNAs: interaction between SRSF3 and YTHDC1 facilitates m6A-containing mRNA-binding to both SRSF3 and NXF1, promoting mRNA nuclear export.</text>
</comment>
<comment type="subunit">
    <text evidence="2 6 7">Heterodimer (via NTF2 domain) with NXT1 (By similarity). The formation of NXF1-NXT1 heterodimers is required for the NXF1-mediated nuclear mRNA export (By similarity). Forms a complex with RANBP2/NUP358, NXT1 and RANGAP1 (By similarity). Associates with the exon junction complex (EJC) (PubMed:12093754). Associates with the transcription/export (TREX) complex (By similarity). Found in a mRNA complex with UPF3A and UPF3B (By similarity). Found in a post-splicing complex with RBM8A, UPF1, UPF2, UPF3A, UPF3B and RNPS1 (By similarity). Interacts (via N-terminus) with DHX9 (via N-terminus); this interaction is direct and negatively regulates NXF1-mediated nuclear export of constitutive transport element (CTE)-containing cellular mRNAs (By similarity). Interacts with FYTTD1/UIF (By similarity). Interacts with EIF4A3 (By similarity). Interacts with NUP42 (By similarity). Interacts with ALYREF/THOC4 (PubMed:10786854). Interacts with CHTOP (By similarity). Interacts with FRG1 (via N-terminus) (By similarity). Interacts with LUZP4 (By similarity). Interacts with FMR1; the interaction occurs in a mRNA-dependent and polyribosomes-independent manner in the nucleus (By similarity). Interacts with CPSF6 (via N-terminus); this interaction is direct (By similarity). Interacts with RBM15 (By similarity). Interacts with RBM15B (By similarity). Interacts with MCM3AP; this interaction is not mediated by RNA (By similarity). Interacts with DDX3X (via C-terminus); this interaction may be partly involved in DDX3X nuclear export and in NXF1 localization to stress granules. Interacts with PABPC1/PABP1 (By similarity).</text>
</comment>
<comment type="subcellular location">
    <subcellularLocation>
        <location evidence="2">Nucleus</location>
        <location evidence="2">Nucleoplasm</location>
    </subcellularLocation>
    <subcellularLocation>
        <location evidence="2">Nucleus speckle</location>
    </subcellularLocation>
    <subcellularLocation>
        <location evidence="2">Cytoplasm</location>
    </subcellularLocation>
    <subcellularLocation>
        <location evidence="2">Nucleus</location>
        <location evidence="2">Nuclear pore complex</location>
    </subcellularLocation>
    <subcellularLocation>
        <location evidence="2">Nucleus envelope</location>
    </subcellularLocation>
    <subcellularLocation>
        <location evidence="2">Cytoplasm</location>
        <location evidence="2">Stress granule</location>
    </subcellularLocation>
    <text evidence="2">Localized predominantly in the nucleoplasm and at both the nucleoplasmic and cytoplasmic faces of the nuclear pore complex. Shuttles between the nucleus and the cytoplasm. Travels to the cytoplasm as part of the exon junction complex (EJC) bound to mRNA. The association with the TREX complex seems to occur in regions surrounding nuclear speckles known as perispeckles. Nucleus; nuclear rim.</text>
</comment>
<comment type="tissue specificity">
    <text>Expressed ubiquitously.</text>
</comment>
<comment type="domain">
    <text evidence="2">The minimal CTE binding domain consists of an RNP-type RNA binding domain (RBD) and leucine-rich repeats.</text>
</comment>
<comment type="domain">
    <text evidence="2">The nucleoporin binding domain consists of a NTF2 domain (also called NTF2-like domain) and a TAP-C domain (also called UBA-like domain). It has 2 nucleoporin-FG-repeats binding sites (one in the NTF2 and the other in the TAP-C domain) which contribute to nucleoporin association and act synergistically to export cellular mRNAs.</text>
</comment>
<comment type="domain">
    <text evidence="2">The NTF2 domain is functional only in the presence of NXT1 and is essential for the export of mRNA from the nucleus. It inhibits RNA binding activity through an intramolecular interaction with the N-terminal RNA binding domain (RBD); the inhibition is removed by an association with the TREX complex, specifically involving ALYREF/THOC4 and THOC5.</text>
</comment>
<comment type="domain">
    <text evidence="2">The TAP-C domain mediates direct interactions with nucleoporin-FG-repeats and is necessary and sufficient for localization of NXF1 to the nuclear rim. The conserved loop 594-NWD-596 of the TAP-C domain has a critical role in the interaction with nucleoporins.</text>
</comment>
<comment type="domain">
    <text evidence="2">The leucine-rich repeats are essential for the export of mRNA from the nucleus.</text>
</comment>
<comment type="domain">
    <text evidence="2">The RNA-binding domain is a non-canonical RNP-type domain.</text>
</comment>
<comment type="similarity">
    <text evidence="8">Belongs to the NXF family.</text>
</comment>